<evidence type="ECO:0000250" key="1">
    <source>
        <dbReference type="UniProtKB" id="Q9BTL4"/>
    </source>
</evidence>
<evidence type="ECO:0000256" key="2">
    <source>
        <dbReference type="SAM" id="MobiDB-lite"/>
    </source>
</evidence>
<evidence type="ECO:0000269" key="3">
    <source>
    </source>
</evidence>
<evidence type="ECO:0000305" key="4"/>
<evidence type="ECO:0000312" key="5">
    <source>
        <dbReference type="EMBL" id="ACJ01791.1"/>
    </source>
</evidence>
<evidence type="ECO:0000312" key="6">
    <source>
        <dbReference type="ZFIN" id="ZDB-GENE-030131-9126"/>
    </source>
</evidence>
<protein>
    <recommendedName>
        <fullName>Immediate early response gene 2 protein</fullName>
    </recommendedName>
</protein>
<comment type="function">
    <text evidence="1 3">DNA-binding protein that seems to act as a transcription factor (By similarity). Mediates with FIBPB FGF-signaling in Kupffer's vesicle ciliogenesis and in the establishment of laterality in the embryo (PubMed:19164561).</text>
</comment>
<comment type="subunit">
    <text evidence="3">Interacts with FIBPB.</text>
</comment>
<comment type="interaction">
    <interactant intactId="EBI-15752758">
        <id>B7SXM5</id>
    </interactant>
    <interactant intactId="EBI-15752740">
        <id>Q6T938</id>
        <label>fibpb</label>
    </interactant>
    <organismsDiffer>false</organismsDiffer>
    <experiments>3</experiments>
</comment>
<comment type="subcellular location">
    <subcellularLocation>
        <location evidence="3">Nucleus</location>
    </subcellularLocation>
    <subcellularLocation>
        <location evidence="1">Cytoplasm</location>
    </subcellularLocation>
</comment>
<comment type="developmental stage">
    <text evidence="3">Expressed after the mid-blastula transition (PubMed:19164561). Expressed in Kupffer's vesicle (PubMed:19164561).</text>
</comment>
<comment type="disruption phenotype">
    <text evidence="3">Morpholino knockdown of the protein causes severe deficits in laterality (PubMed:19164561). Partial loss of Kupffer's vesicle cilia with the length of the remaining cilia reduced (PubMed:19164561). Double morpholino knockdown of IER2 and FIBPB causes an almost complete loss of Kupffer's vesicle cilia (PubMed:19164561).</text>
</comment>
<comment type="similarity">
    <text evidence="4">Belongs to the IER family.</text>
</comment>
<feature type="chain" id="PRO_0000433931" description="Immediate early response gene 2 protein">
    <location>
        <begin position="1"/>
        <end position="180"/>
    </location>
</feature>
<feature type="region of interest" description="Disordered" evidence="2">
    <location>
        <begin position="53"/>
        <end position="135"/>
    </location>
</feature>
<feature type="compositionally biased region" description="Polar residues" evidence="2">
    <location>
        <begin position="56"/>
        <end position="92"/>
    </location>
</feature>
<feature type="compositionally biased region" description="Basic and acidic residues" evidence="2">
    <location>
        <begin position="93"/>
        <end position="103"/>
    </location>
</feature>
<name>IER2_DANRE</name>
<keyword id="KW-0963">Cytoplasm</keyword>
<keyword id="KW-0539">Nucleus</keyword>
<keyword id="KW-1185">Reference proteome</keyword>
<proteinExistence type="evidence at protein level"/>
<reference key="1">
    <citation type="journal article" date="2009" name="Proc. Natl. Acad. Sci. U.S.A.">
        <title>FGF-dependent left-right asymmetry patterning in zebrafish is mediated by Ier2 and Fibp1.</title>
        <authorList>
            <person name="Hong S.K."/>
            <person name="Dawid I.B."/>
        </authorList>
    </citation>
    <scope>NUCLEOTIDE SEQUENCE [MRNA]</scope>
    <scope>FUNCTION</scope>
    <scope>DEVELOPMENTAL STAGE</scope>
    <scope>SUBCELLULAR LOCATION</scope>
    <scope>INTERACTION WITH FIBPB</scope>
    <scope>DISRUPTION PHENOTYPE</scope>
</reference>
<reference key="2">
    <citation type="journal article" date="2013" name="Nature">
        <title>The zebrafish reference genome sequence and its relationship to the human genome.</title>
        <authorList>
            <person name="Howe K."/>
            <person name="Clark M.D."/>
            <person name="Torroja C.F."/>
            <person name="Torrance J."/>
            <person name="Berthelot C."/>
            <person name="Muffato M."/>
            <person name="Collins J.E."/>
            <person name="Humphray S."/>
            <person name="McLaren K."/>
            <person name="Matthews L."/>
            <person name="McLaren S."/>
            <person name="Sealy I."/>
            <person name="Caccamo M."/>
            <person name="Churcher C."/>
            <person name="Scott C."/>
            <person name="Barrett J.C."/>
            <person name="Koch R."/>
            <person name="Rauch G.J."/>
            <person name="White S."/>
            <person name="Chow W."/>
            <person name="Kilian B."/>
            <person name="Quintais L.T."/>
            <person name="Guerra-Assuncao J.A."/>
            <person name="Zhou Y."/>
            <person name="Gu Y."/>
            <person name="Yen J."/>
            <person name="Vogel J.H."/>
            <person name="Eyre T."/>
            <person name="Redmond S."/>
            <person name="Banerjee R."/>
            <person name="Chi J."/>
            <person name="Fu B."/>
            <person name="Langley E."/>
            <person name="Maguire S.F."/>
            <person name="Laird G.K."/>
            <person name="Lloyd D."/>
            <person name="Kenyon E."/>
            <person name="Donaldson S."/>
            <person name="Sehra H."/>
            <person name="Almeida-King J."/>
            <person name="Loveland J."/>
            <person name="Trevanion S."/>
            <person name="Jones M."/>
            <person name="Quail M."/>
            <person name="Willey D."/>
            <person name="Hunt A."/>
            <person name="Burton J."/>
            <person name="Sims S."/>
            <person name="McLay K."/>
            <person name="Plumb B."/>
            <person name="Davis J."/>
            <person name="Clee C."/>
            <person name="Oliver K."/>
            <person name="Clark R."/>
            <person name="Riddle C."/>
            <person name="Elliot D."/>
            <person name="Threadgold G."/>
            <person name="Harden G."/>
            <person name="Ware D."/>
            <person name="Begum S."/>
            <person name="Mortimore B."/>
            <person name="Kerry G."/>
            <person name="Heath P."/>
            <person name="Phillimore B."/>
            <person name="Tracey A."/>
            <person name="Corby N."/>
            <person name="Dunn M."/>
            <person name="Johnson C."/>
            <person name="Wood J."/>
            <person name="Clark S."/>
            <person name="Pelan S."/>
            <person name="Griffiths G."/>
            <person name="Smith M."/>
            <person name="Glithero R."/>
            <person name="Howden P."/>
            <person name="Barker N."/>
            <person name="Lloyd C."/>
            <person name="Stevens C."/>
            <person name="Harley J."/>
            <person name="Holt K."/>
            <person name="Panagiotidis G."/>
            <person name="Lovell J."/>
            <person name="Beasley H."/>
            <person name="Henderson C."/>
            <person name="Gordon D."/>
            <person name="Auger K."/>
            <person name="Wright D."/>
            <person name="Collins J."/>
            <person name="Raisen C."/>
            <person name="Dyer L."/>
            <person name="Leung K."/>
            <person name="Robertson L."/>
            <person name="Ambridge K."/>
            <person name="Leongamornlert D."/>
            <person name="McGuire S."/>
            <person name="Gilderthorp R."/>
            <person name="Griffiths C."/>
            <person name="Manthravadi D."/>
            <person name="Nichol S."/>
            <person name="Barker G."/>
            <person name="Whitehead S."/>
            <person name="Kay M."/>
            <person name="Brown J."/>
            <person name="Murnane C."/>
            <person name="Gray E."/>
            <person name="Humphries M."/>
            <person name="Sycamore N."/>
            <person name="Barker D."/>
            <person name="Saunders D."/>
            <person name="Wallis J."/>
            <person name="Babbage A."/>
            <person name="Hammond S."/>
            <person name="Mashreghi-Mohammadi M."/>
            <person name="Barr L."/>
            <person name="Martin S."/>
            <person name="Wray P."/>
            <person name="Ellington A."/>
            <person name="Matthews N."/>
            <person name="Ellwood M."/>
            <person name="Woodmansey R."/>
            <person name="Clark G."/>
            <person name="Cooper J."/>
            <person name="Tromans A."/>
            <person name="Grafham D."/>
            <person name="Skuce C."/>
            <person name="Pandian R."/>
            <person name="Andrews R."/>
            <person name="Harrison E."/>
            <person name="Kimberley A."/>
            <person name="Garnett J."/>
            <person name="Fosker N."/>
            <person name="Hall R."/>
            <person name="Garner P."/>
            <person name="Kelly D."/>
            <person name="Bird C."/>
            <person name="Palmer S."/>
            <person name="Gehring I."/>
            <person name="Berger A."/>
            <person name="Dooley C.M."/>
            <person name="Ersan-Urun Z."/>
            <person name="Eser C."/>
            <person name="Geiger H."/>
            <person name="Geisler M."/>
            <person name="Karotki L."/>
            <person name="Kirn A."/>
            <person name="Konantz J."/>
            <person name="Konantz M."/>
            <person name="Oberlander M."/>
            <person name="Rudolph-Geiger S."/>
            <person name="Teucke M."/>
            <person name="Lanz C."/>
            <person name="Raddatz G."/>
            <person name="Osoegawa K."/>
            <person name="Zhu B."/>
            <person name="Rapp A."/>
            <person name="Widaa S."/>
            <person name="Langford C."/>
            <person name="Yang F."/>
            <person name="Schuster S.C."/>
            <person name="Carter N.P."/>
            <person name="Harrow J."/>
            <person name="Ning Z."/>
            <person name="Herrero J."/>
            <person name="Searle S.M."/>
            <person name="Enright A."/>
            <person name="Geisler R."/>
            <person name="Plasterk R.H."/>
            <person name="Lee C."/>
            <person name="Westerfield M."/>
            <person name="de Jong P.J."/>
            <person name="Zon L.I."/>
            <person name="Postlethwait J.H."/>
            <person name="Nusslein-Volhard C."/>
            <person name="Hubbard T.J."/>
            <person name="Roest Crollius H."/>
            <person name="Rogers J."/>
            <person name="Stemple D.L."/>
        </authorList>
    </citation>
    <scope>NUCLEOTIDE SEQUENCE [LARGE SCALE GENOMIC DNA]</scope>
    <source>
        <strain>Tuebingen</strain>
    </source>
</reference>
<dbReference type="EMBL" id="EU815060">
    <property type="protein sequence ID" value="ACJ01791.1"/>
    <property type="molecule type" value="mRNA"/>
</dbReference>
<dbReference type="EMBL" id="CABZ01012976">
    <property type="status" value="NOT_ANNOTATED_CDS"/>
    <property type="molecule type" value="Genomic_DNA"/>
</dbReference>
<dbReference type="SMR" id="B7SXM5"/>
<dbReference type="DIP" id="DIP-48706N"/>
<dbReference type="FunCoup" id="B7SXM5">
    <property type="interactions" value="627"/>
</dbReference>
<dbReference type="IntAct" id="B7SXM5">
    <property type="interactions" value="1"/>
</dbReference>
<dbReference type="STRING" id="7955.ENSDARP00000135138"/>
<dbReference type="AGR" id="ZFIN:ZDB-GENE-030131-9126"/>
<dbReference type="ZFIN" id="ZDB-GENE-030131-9126">
    <property type="gene designation" value="ier2a"/>
</dbReference>
<dbReference type="InParanoid" id="B7SXM5"/>
<dbReference type="PhylomeDB" id="B7SXM5"/>
<dbReference type="PRO" id="PR:B7SXM5"/>
<dbReference type="Proteomes" id="UP000000437">
    <property type="component" value="Unplaced"/>
</dbReference>
<dbReference type="GO" id="GO:0005737">
    <property type="term" value="C:cytoplasm"/>
    <property type="evidence" value="ECO:0007669"/>
    <property type="project" value="UniProtKB-SubCell"/>
</dbReference>
<dbReference type="GO" id="GO:0005634">
    <property type="term" value="C:nucleus"/>
    <property type="evidence" value="ECO:0000316"/>
    <property type="project" value="ZFIN"/>
</dbReference>
<dbReference type="GO" id="GO:0060271">
    <property type="term" value="P:cilium assembly"/>
    <property type="evidence" value="ECO:0000315"/>
    <property type="project" value="ZFIN"/>
</dbReference>
<dbReference type="GO" id="GO:0060026">
    <property type="term" value="P:convergent extension"/>
    <property type="evidence" value="ECO:0000315"/>
    <property type="project" value="ZFIN"/>
</dbReference>
<dbReference type="GO" id="GO:0007368">
    <property type="term" value="P:determination of left/right symmetry"/>
    <property type="evidence" value="ECO:0000315"/>
    <property type="project" value="ZFIN"/>
</dbReference>
<dbReference type="GO" id="GO:0070121">
    <property type="term" value="P:Kupffer's vesicle development"/>
    <property type="evidence" value="ECO:0000315"/>
    <property type="project" value="ZFIN"/>
</dbReference>
<dbReference type="InterPro" id="IPR008653">
    <property type="entry name" value="IER"/>
</dbReference>
<dbReference type="PANTHER" id="PTHR15895">
    <property type="entry name" value="IMMEDIATE EARLY RESPONSE GENE"/>
    <property type="match status" value="1"/>
</dbReference>
<dbReference type="Pfam" id="PF05760">
    <property type="entry name" value="IER"/>
    <property type="match status" value="1"/>
</dbReference>
<gene>
    <name evidence="6" type="primary">ier2</name>
</gene>
<sequence>MDVTAEAKQIMVQALGKMYSSRSQRGGLRLHRSLLLTLVMKSARDIYHSARLMSEKSGQSVTEECTSHTQEPMDTSSSTATPLRETSGQSSEDGQRSGLEGHPHPLNPAADKENCGPSRPDRHSRKRRSKTATDSDFIPCKKAKLECAEVRGVLQNSSANCGRALDSLSLVPMPRTIVTF</sequence>
<accession>B7SXM5</accession>
<organism evidence="5">
    <name type="scientific">Danio rerio</name>
    <name type="common">Zebrafish</name>
    <name type="synonym">Brachydanio rerio</name>
    <dbReference type="NCBI Taxonomy" id="7955"/>
    <lineage>
        <taxon>Eukaryota</taxon>
        <taxon>Metazoa</taxon>
        <taxon>Chordata</taxon>
        <taxon>Craniata</taxon>
        <taxon>Vertebrata</taxon>
        <taxon>Euteleostomi</taxon>
        <taxon>Actinopterygii</taxon>
        <taxon>Neopterygii</taxon>
        <taxon>Teleostei</taxon>
        <taxon>Ostariophysi</taxon>
        <taxon>Cypriniformes</taxon>
        <taxon>Danionidae</taxon>
        <taxon>Danioninae</taxon>
        <taxon>Danio</taxon>
    </lineage>
</organism>